<evidence type="ECO:0000269" key="1">
    <source>
    </source>
</evidence>
<evidence type="ECO:0000303" key="2">
    <source>
    </source>
</evidence>
<evidence type="ECO:0000305" key="3"/>
<keyword id="KW-0027">Amidation</keyword>
<keyword id="KW-0903">Direct protein sequencing</keyword>
<keyword id="KW-0527">Neuropeptide</keyword>
<keyword id="KW-0964">Secreted</keyword>
<comment type="subcellular location">
    <subcellularLocation>
        <location evidence="1 3">Secreted</location>
    </subcellularLocation>
</comment>
<comment type="tissue specificity">
    <text evidence="1">Expressed in the antennal lobe (at protein level).</text>
</comment>
<proteinExistence type="evidence at protein level"/>
<sequence>GPSSGFFGTR</sequence>
<accession>P86596</accession>
<feature type="peptide" id="PRO_0000395664" description="Tachykinin-related peptide 3" evidence="1">
    <location>
        <begin position="1"/>
        <end position="10"/>
    </location>
</feature>
<feature type="modified residue" description="Arginine amide" evidence="1">
    <location>
        <position position="10"/>
    </location>
</feature>
<reference evidence="3" key="1">
    <citation type="journal article" date="2009" name="Peptides">
        <title>Neuropeptides in Heteroptera: identification of allatotropin-related peptide and tachykinin-related peptides using MALDI-TOF mass spectrometry.</title>
        <authorList>
            <person name="Neupert S."/>
            <person name="Russell W.K."/>
            <person name="Russell D.H."/>
            <person name="Lopez J.D. Jr."/>
            <person name="Predel R."/>
            <person name="Nachman R.J."/>
        </authorList>
    </citation>
    <scope>PROTEIN SEQUENCE</scope>
    <scope>SUBCELLULAR LOCATION</scope>
    <scope>TISSUE SPECIFICITY</scope>
    <scope>AMIDATION AT ARG-10</scope>
    <source>
        <tissue evidence="1">Antennal lobe</tissue>
    </source>
</reference>
<name>TRP3_PYRAP</name>
<protein>
    <recommendedName>
        <fullName evidence="2">Tachykinin-related peptide 3</fullName>
        <shortName evidence="2">TKRP-3</shortName>
    </recommendedName>
</protein>
<dbReference type="GO" id="GO:0005576">
    <property type="term" value="C:extracellular region"/>
    <property type="evidence" value="ECO:0007005"/>
    <property type="project" value="UniProtKB"/>
</dbReference>
<dbReference type="GO" id="GO:0007218">
    <property type="term" value="P:neuropeptide signaling pathway"/>
    <property type="evidence" value="ECO:0007669"/>
    <property type="project" value="UniProtKB-KW"/>
</dbReference>
<organism>
    <name type="scientific">Pyrrhocoris apterus</name>
    <name type="common">Sap sucking bug</name>
    <name type="synonym">Cimex apterus</name>
    <dbReference type="NCBI Taxonomy" id="37000"/>
    <lineage>
        <taxon>Eukaryota</taxon>
        <taxon>Metazoa</taxon>
        <taxon>Ecdysozoa</taxon>
        <taxon>Arthropoda</taxon>
        <taxon>Hexapoda</taxon>
        <taxon>Insecta</taxon>
        <taxon>Pterygota</taxon>
        <taxon>Neoptera</taxon>
        <taxon>Paraneoptera</taxon>
        <taxon>Hemiptera</taxon>
        <taxon>Heteroptera</taxon>
        <taxon>Panheteroptera</taxon>
        <taxon>Pentatomomorpha</taxon>
        <taxon>Pyrrhocoroidea</taxon>
        <taxon>Pyrrhocoridae</taxon>
        <taxon>Pyrrhocoris</taxon>
    </lineage>
</organism>